<comment type="function">
    <text evidence="1">Is probably a protein kinase regulator of UbiI activity which is involved in aerobic coenzyme Q (ubiquinone) biosynthesis.</text>
</comment>
<comment type="pathway">
    <text>Cofactor biosynthesis; ubiquinone biosynthesis [regulation].</text>
</comment>
<comment type="subcellular location">
    <subcellularLocation>
        <location evidence="1">Cell inner membrane</location>
        <topology evidence="1">Multi-pass membrane protein</topology>
    </subcellularLocation>
</comment>
<comment type="similarity">
    <text evidence="1">Belongs to the ABC1 family. UbiB subfamily.</text>
</comment>
<proteinExistence type="inferred from homology"/>
<accession>Q9PCE8</accession>
<protein>
    <recommendedName>
        <fullName evidence="1">Probable protein kinase UbiB</fullName>
        <ecNumber evidence="1">2.7.-.-</ecNumber>
    </recommendedName>
    <alternativeName>
        <fullName evidence="1">Ubiquinone biosynthesis protein UbiB</fullName>
    </alternativeName>
</protein>
<name>UBIB_XYLFA</name>
<dbReference type="EC" id="2.7.-.-" evidence="1"/>
<dbReference type="EMBL" id="AE003849">
    <property type="protein sequence ID" value="AAF84639.1"/>
    <property type="molecule type" value="Genomic_DNA"/>
</dbReference>
<dbReference type="PIR" id="E82633">
    <property type="entry name" value="E82633"/>
</dbReference>
<dbReference type="RefSeq" id="WP_010894299.1">
    <property type="nucleotide sequence ID" value="NC_002488.3"/>
</dbReference>
<dbReference type="SMR" id="Q9PCE8"/>
<dbReference type="STRING" id="160492.XF_1833"/>
<dbReference type="KEGG" id="xfa:XF_1833"/>
<dbReference type="eggNOG" id="COG0661">
    <property type="taxonomic scope" value="Bacteria"/>
</dbReference>
<dbReference type="HOGENOM" id="CLU_006533_0_0_6"/>
<dbReference type="UniPathway" id="UPA00232"/>
<dbReference type="Proteomes" id="UP000000812">
    <property type="component" value="Chromosome"/>
</dbReference>
<dbReference type="GO" id="GO:0005886">
    <property type="term" value="C:plasma membrane"/>
    <property type="evidence" value="ECO:0007669"/>
    <property type="project" value="UniProtKB-SubCell"/>
</dbReference>
<dbReference type="GO" id="GO:0005524">
    <property type="term" value="F:ATP binding"/>
    <property type="evidence" value="ECO:0007669"/>
    <property type="project" value="UniProtKB-KW"/>
</dbReference>
<dbReference type="GO" id="GO:0004672">
    <property type="term" value="F:protein kinase activity"/>
    <property type="evidence" value="ECO:0007669"/>
    <property type="project" value="UniProtKB-UniRule"/>
</dbReference>
<dbReference type="GO" id="GO:0010795">
    <property type="term" value="P:regulation of ubiquinone biosynthetic process"/>
    <property type="evidence" value="ECO:0007669"/>
    <property type="project" value="UniProtKB-UniRule"/>
</dbReference>
<dbReference type="GO" id="GO:0006744">
    <property type="term" value="P:ubiquinone biosynthetic process"/>
    <property type="evidence" value="ECO:0007669"/>
    <property type="project" value="UniProtKB-UniPathway"/>
</dbReference>
<dbReference type="CDD" id="cd13972">
    <property type="entry name" value="UbiB"/>
    <property type="match status" value="1"/>
</dbReference>
<dbReference type="HAMAP" id="MF_00414">
    <property type="entry name" value="UbiB"/>
    <property type="match status" value="1"/>
</dbReference>
<dbReference type="InterPro" id="IPR004147">
    <property type="entry name" value="ABC1_dom"/>
</dbReference>
<dbReference type="InterPro" id="IPR011009">
    <property type="entry name" value="Kinase-like_dom_sf"/>
</dbReference>
<dbReference type="InterPro" id="IPR010232">
    <property type="entry name" value="UbiB"/>
</dbReference>
<dbReference type="InterPro" id="IPR045308">
    <property type="entry name" value="UbiB_bact"/>
</dbReference>
<dbReference type="InterPro" id="IPR050154">
    <property type="entry name" value="UbiB_kinase"/>
</dbReference>
<dbReference type="NCBIfam" id="NF003404">
    <property type="entry name" value="PRK04750.1"/>
    <property type="match status" value="1"/>
</dbReference>
<dbReference type="NCBIfam" id="TIGR01982">
    <property type="entry name" value="UbiB"/>
    <property type="match status" value="1"/>
</dbReference>
<dbReference type="PANTHER" id="PTHR10566">
    <property type="entry name" value="CHAPERONE-ACTIVITY OF BC1 COMPLEX CABC1 -RELATED"/>
    <property type="match status" value="1"/>
</dbReference>
<dbReference type="PANTHER" id="PTHR10566:SF113">
    <property type="entry name" value="PROTEIN ACTIVITY OF BC1 COMPLEX KINASE 7, CHLOROPLASTIC"/>
    <property type="match status" value="1"/>
</dbReference>
<dbReference type="Pfam" id="PF03109">
    <property type="entry name" value="ABC1"/>
    <property type="match status" value="1"/>
</dbReference>
<dbReference type="SUPFAM" id="SSF56112">
    <property type="entry name" value="Protein kinase-like (PK-like)"/>
    <property type="match status" value="1"/>
</dbReference>
<reference key="1">
    <citation type="journal article" date="2000" name="Nature">
        <title>The genome sequence of the plant pathogen Xylella fastidiosa.</title>
        <authorList>
            <person name="Simpson A.J.G."/>
            <person name="Reinach F.C."/>
            <person name="Arruda P."/>
            <person name="Abreu F.A."/>
            <person name="Acencio M."/>
            <person name="Alvarenga R."/>
            <person name="Alves L.M.C."/>
            <person name="Araya J.E."/>
            <person name="Baia G.S."/>
            <person name="Baptista C.S."/>
            <person name="Barros M.H."/>
            <person name="Bonaccorsi E.D."/>
            <person name="Bordin S."/>
            <person name="Bove J.M."/>
            <person name="Briones M.R.S."/>
            <person name="Bueno M.R.P."/>
            <person name="Camargo A.A."/>
            <person name="Camargo L.E.A."/>
            <person name="Carraro D.M."/>
            <person name="Carrer H."/>
            <person name="Colauto N.B."/>
            <person name="Colombo C."/>
            <person name="Costa F.F."/>
            <person name="Costa M.C.R."/>
            <person name="Costa-Neto C.M."/>
            <person name="Coutinho L.L."/>
            <person name="Cristofani M."/>
            <person name="Dias-Neto E."/>
            <person name="Docena C."/>
            <person name="El-Dorry H."/>
            <person name="Facincani A.P."/>
            <person name="Ferreira A.J.S."/>
            <person name="Ferreira V.C.A."/>
            <person name="Ferro J.A."/>
            <person name="Fraga J.S."/>
            <person name="Franca S.C."/>
            <person name="Franco M.C."/>
            <person name="Frohme M."/>
            <person name="Furlan L.R."/>
            <person name="Garnier M."/>
            <person name="Goldman G.H."/>
            <person name="Goldman M.H.S."/>
            <person name="Gomes S.L."/>
            <person name="Gruber A."/>
            <person name="Ho P.L."/>
            <person name="Hoheisel J.D."/>
            <person name="Junqueira M.L."/>
            <person name="Kemper E.L."/>
            <person name="Kitajima J.P."/>
            <person name="Krieger J.E."/>
            <person name="Kuramae E.E."/>
            <person name="Laigret F."/>
            <person name="Lambais M.R."/>
            <person name="Leite L.C.C."/>
            <person name="Lemos E.G.M."/>
            <person name="Lemos M.V.F."/>
            <person name="Lopes S.A."/>
            <person name="Lopes C.R."/>
            <person name="Machado J.A."/>
            <person name="Machado M.A."/>
            <person name="Madeira A.M.B.N."/>
            <person name="Madeira H.M.F."/>
            <person name="Marino C.L."/>
            <person name="Marques M.V."/>
            <person name="Martins E.A.L."/>
            <person name="Martins E.M.F."/>
            <person name="Matsukuma A.Y."/>
            <person name="Menck C.F.M."/>
            <person name="Miracca E.C."/>
            <person name="Miyaki C.Y."/>
            <person name="Monteiro-Vitorello C.B."/>
            <person name="Moon D.H."/>
            <person name="Nagai M.A."/>
            <person name="Nascimento A.L.T.O."/>
            <person name="Netto L.E.S."/>
            <person name="Nhani A. Jr."/>
            <person name="Nobrega F.G."/>
            <person name="Nunes L.R."/>
            <person name="Oliveira M.A."/>
            <person name="de Oliveira M.C."/>
            <person name="de Oliveira R.C."/>
            <person name="Palmieri D.A."/>
            <person name="Paris A."/>
            <person name="Peixoto B.R."/>
            <person name="Pereira G.A.G."/>
            <person name="Pereira H.A. Jr."/>
            <person name="Pesquero J.B."/>
            <person name="Quaggio R.B."/>
            <person name="Roberto P.G."/>
            <person name="Rodrigues V."/>
            <person name="de Rosa A.J.M."/>
            <person name="de Rosa V.E. Jr."/>
            <person name="de Sa R.G."/>
            <person name="Santelli R.V."/>
            <person name="Sawasaki H.E."/>
            <person name="da Silva A.C.R."/>
            <person name="da Silva A.M."/>
            <person name="da Silva F.R."/>
            <person name="Silva W.A. Jr."/>
            <person name="da Silveira J.F."/>
            <person name="Silvestri M.L.Z."/>
            <person name="Siqueira W.J."/>
            <person name="de Souza A.A."/>
            <person name="de Souza A.P."/>
            <person name="Terenzi M.F."/>
            <person name="Truffi D."/>
            <person name="Tsai S.M."/>
            <person name="Tsuhako M.H."/>
            <person name="Vallada H."/>
            <person name="Van Sluys M.A."/>
            <person name="Verjovski-Almeida S."/>
            <person name="Vettore A.L."/>
            <person name="Zago M.A."/>
            <person name="Zatz M."/>
            <person name="Meidanis J."/>
            <person name="Setubal J.C."/>
        </authorList>
    </citation>
    <scope>NUCLEOTIDE SEQUENCE [LARGE SCALE GENOMIC DNA]</scope>
    <source>
        <strain>9a5c</strain>
    </source>
</reference>
<organism>
    <name type="scientific">Xylella fastidiosa (strain 9a5c)</name>
    <dbReference type="NCBI Taxonomy" id="160492"/>
    <lineage>
        <taxon>Bacteria</taxon>
        <taxon>Pseudomonadati</taxon>
        <taxon>Pseudomonadota</taxon>
        <taxon>Gammaproteobacteria</taxon>
        <taxon>Lysobacterales</taxon>
        <taxon>Lysobacteraceae</taxon>
        <taxon>Xylella</taxon>
    </lineage>
</organism>
<keyword id="KW-0067">ATP-binding</keyword>
<keyword id="KW-0997">Cell inner membrane</keyword>
<keyword id="KW-1003">Cell membrane</keyword>
<keyword id="KW-0418">Kinase</keyword>
<keyword id="KW-0472">Membrane</keyword>
<keyword id="KW-0547">Nucleotide-binding</keyword>
<keyword id="KW-0808">Transferase</keyword>
<keyword id="KW-0812">Transmembrane</keyword>
<keyword id="KW-1133">Transmembrane helix</keyword>
<keyword id="KW-0831">Ubiquinone biosynthesis</keyword>
<evidence type="ECO:0000255" key="1">
    <source>
        <dbReference type="HAMAP-Rule" id="MF_00414"/>
    </source>
</evidence>
<feature type="chain" id="PRO_0000200726" description="Probable protein kinase UbiB">
    <location>
        <begin position="1"/>
        <end position="552"/>
    </location>
</feature>
<feature type="transmembrane region" description="Helical" evidence="1">
    <location>
        <begin position="501"/>
        <end position="521"/>
    </location>
</feature>
<feature type="transmembrane region" description="Helical" evidence="1">
    <location>
        <begin position="526"/>
        <end position="546"/>
    </location>
</feature>
<feature type="domain" description="Protein kinase" evidence="1">
    <location>
        <begin position="121"/>
        <end position="504"/>
    </location>
</feature>
<feature type="active site" description="Proton acceptor" evidence="1">
    <location>
        <position position="284"/>
    </location>
</feature>
<feature type="binding site" evidence="1">
    <location>
        <begin position="127"/>
        <end position="135"/>
    </location>
    <ligand>
        <name>ATP</name>
        <dbReference type="ChEBI" id="CHEBI:30616"/>
    </ligand>
</feature>
<feature type="binding site" evidence="1">
    <location>
        <position position="149"/>
    </location>
    <ligand>
        <name>ATP</name>
        <dbReference type="ChEBI" id="CHEBI:30616"/>
    </ligand>
</feature>
<sequence length="552" mass="62466">MKALFRACRIGKVMLRYRLDTLLDGTAAERWLRLAKPFVPRISAEIVEQSRGRRLRLALQELGPIFVKFGQILSTRRDLVPQDIGDELVMLQDRVEPFEGQTARIIIETALGKSVESAFAHFDTVPLASASISQVHAATLHDGREVVVKVLRPDIEHQISDDIALLKSLATLVEHTHPNADKIRPCEIVAEIETTLAAELDLQREGANASVLRRFWEASDDIYVPEVIWSHTAEQVLTLERMYGIPSDDIALLDASGIDRKALSSKGIRVFYTQVFRDNFFHADAHSGNIWVDSDPARKSNPRFIALDFGIMGQLSQKDQYYLAENFMAIFHKDYRRIAELHVEAGWIPPHVRIEELEAAARSVCEPYFTRPLSQISLAEVLMKLFHVARRYQLTLQPQLILLQKTLLNIEGVGRQLDPELDIWVVARPVLERILRARYSPRHALKELNKRLPEIMTHAPDTPRLIHTWLVQQVESRKQNDVYLQQIRALAMTLQGLQRRVVNAIVGSGLLVAAAVLYGLHPDGLYLGAIPVWSLISGCVGALALFSAWWRS</sequence>
<gene>
    <name evidence="1" type="primary">ubiB</name>
    <name type="ordered locus">XF_1833</name>
</gene>